<gene>
    <name evidence="1" type="primary">rplN</name>
    <name type="ordered locus">TW217</name>
</gene>
<organism>
    <name type="scientific">Tropheryma whipplei (strain TW08/27)</name>
    <name type="common">Whipple's bacillus</name>
    <dbReference type="NCBI Taxonomy" id="218496"/>
    <lineage>
        <taxon>Bacteria</taxon>
        <taxon>Bacillati</taxon>
        <taxon>Actinomycetota</taxon>
        <taxon>Actinomycetes</taxon>
        <taxon>Micrococcales</taxon>
        <taxon>Tropherymataceae</taxon>
        <taxon>Tropheryma</taxon>
    </lineage>
</organism>
<protein>
    <recommendedName>
        <fullName evidence="1">Large ribosomal subunit protein uL14</fullName>
    </recommendedName>
    <alternativeName>
        <fullName evidence="2">50S ribosomal protein L14</fullName>
    </alternativeName>
</protein>
<name>RL14_TROW8</name>
<proteinExistence type="inferred from homology"/>
<accession>Q83I68</accession>
<comment type="function">
    <text evidence="1">Binds to 23S rRNA. Forms part of two intersubunit bridges in the 70S ribosome.</text>
</comment>
<comment type="subunit">
    <text evidence="1">Part of the 50S ribosomal subunit. Forms a cluster with proteins L3 and L19. In the 70S ribosome, L14 and L19 interact and together make contacts with the 16S rRNA in bridges B5 and B8.</text>
</comment>
<comment type="similarity">
    <text evidence="1">Belongs to the universal ribosomal protein uL14 family.</text>
</comment>
<dbReference type="EMBL" id="BX251410">
    <property type="protein sequence ID" value="CAD66894.1"/>
    <property type="molecule type" value="Genomic_DNA"/>
</dbReference>
<dbReference type="RefSeq" id="WP_011096175.1">
    <property type="nucleotide sequence ID" value="NC_004551.1"/>
</dbReference>
<dbReference type="SMR" id="Q83I68"/>
<dbReference type="GeneID" id="67387993"/>
<dbReference type="KEGG" id="tws:TW217"/>
<dbReference type="HOGENOM" id="CLU_095071_2_1_11"/>
<dbReference type="GO" id="GO:0022625">
    <property type="term" value="C:cytosolic large ribosomal subunit"/>
    <property type="evidence" value="ECO:0007669"/>
    <property type="project" value="TreeGrafter"/>
</dbReference>
<dbReference type="GO" id="GO:0070180">
    <property type="term" value="F:large ribosomal subunit rRNA binding"/>
    <property type="evidence" value="ECO:0007669"/>
    <property type="project" value="TreeGrafter"/>
</dbReference>
<dbReference type="GO" id="GO:0003735">
    <property type="term" value="F:structural constituent of ribosome"/>
    <property type="evidence" value="ECO:0007669"/>
    <property type="project" value="InterPro"/>
</dbReference>
<dbReference type="GO" id="GO:0006412">
    <property type="term" value="P:translation"/>
    <property type="evidence" value="ECO:0007669"/>
    <property type="project" value="UniProtKB-UniRule"/>
</dbReference>
<dbReference type="CDD" id="cd00337">
    <property type="entry name" value="Ribosomal_uL14"/>
    <property type="match status" value="1"/>
</dbReference>
<dbReference type="FunFam" id="2.40.150.20:FF:000001">
    <property type="entry name" value="50S ribosomal protein L14"/>
    <property type="match status" value="1"/>
</dbReference>
<dbReference type="Gene3D" id="2.40.150.20">
    <property type="entry name" value="Ribosomal protein L14"/>
    <property type="match status" value="1"/>
</dbReference>
<dbReference type="HAMAP" id="MF_01367">
    <property type="entry name" value="Ribosomal_uL14"/>
    <property type="match status" value="1"/>
</dbReference>
<dbReference type="InterPro" id="IPR000218">
    <property type="entry name" value="Ribosomal_uL14"/>
</dbReference>
<dbReference type="InterPro" id="IPR005745">
    <property type="entry name" value="Ribosomal_uL14_bac-type"/>
</dbReference>
<dbReference type="InterPro" id="IPR019972">
    <property type="entry name" value="Ribosomal_uL14_CS"/>
</dbReference>
<dbReference type="InterPro" id="IPR036853">
    <property type="entry name" value="Ribosomal_uL14_sf"/>
</dbReference>
<dbReference type="NCBIfam" id="TIGR01067">
    <property type="entry name" value="rplN_bact"/>
    <property type="match status" value="1"/>
</dbReference>
<dbReference type="PANTHER" id="PTHR11761">
    <property type="entry name" value="50S/60S RIBOSOMAL PROTEIN L14/L23"/>
    <property type="match status" value="1"/>
</dbReference>
<dbReference type="PANTHER" id="PTHR11761:SF3">
    <property type="entry name" value="LARGE RIBOSOMAL SUBUNIT PROTEIN UL14M"/>
    <property type="match status" value="1"/>
</dbReference>
<dbReference type="Pfam" id="PF00238">
    <property type="entry name" value="Ribosomal_L14"/>
    <property type="match status" value="1"/>
</dbReference>
<dbReference type="SMART" id="SM01374">
    <property type="entry name" value="Ribosomal_L14"/>
    <property type="match status" value="1"/>
</dbReference>
<dbReference type="SUPFAM" id="SSF50193">
    <property type="entry name" value="Ribosomal protein L14"/>
    <property type="match status" value="1"/>
</dbReference>
<dbReference type="PROSITE" id="PS00049">
    <property type="entry name" value="RIBOSOMAL_L14"/>
    <property type="match status" value="1"/>
</dbReference>
<evidence type="ECO:0000255" key="1">
    <source>
        <dbReference type="HAMAP-Rule" id="MF_01367"/>
    </source>
</evidence>
<evidence type="ECO:0000305" key="2"/>
<reference key="1">
    <citation type="journal article" date="2003" name="Lancet">
        <title>Sequencing and analysis of the genome of the Whipple's disease bacterium Tropheryma whipplei.</title>
        <authorList>
            <person name="Bentley S.D."/>
            <person name="Maiwald M."/>
            <person name="Murphy L.D."/>
            <person name="Pallen M.J."/>
            <person name="Yeats C.A."/>
            <person name="Dover L.G."/>
            <person name="Norbertczak H.T."/>
            <person name="Besra G.S."/>
            <person name="Quail M.A."/>
            <person name="Harris D.E."/>
            <person name="von Herbay A."/>
            <person name="Goble A."/>
            <person name="Rutter S."/>
            <person name="Squares R."/>
            <person name="Squares S."/>
            <person name="Barrell B.G."/>
            <person name="Parkhill J."/>
            <person name="Relman D.A."/>
        </authorList>
    </citation>
    <scope>NUCLEOTIDE SEQUENCE [LARGE SCALE GENOMIC DNA]</scope>
    <source>
        <strain>TW08/27</strain>
    </source>
</reference>
<feature type="chain" id="PRO_1000055746" description="Large ribosomal subunit protein uL14">
    <location>
        <begin position="1"/>
        <end position="123"/>
    </location>
</feature>
<sequence>MIQQESRLKVADNTGAKSLSVIRVLGGSNRRFGSLGDVVVASVKDAVPGSSAVKKGDVVKAVIVRSTKEVRRTDGSYIRFDDNAAVILRPDNDPRGTRIFGPVARELRDRKFTRIISLAPEVV</sequence>
<keyword id="KW-0687">Ribonucleoprotein</keyword>
<keyword id="KW-0689">Ribosomal protein</keyword>
<keyword id="KW-0694">RNA-binding</keyword>
<keyword id="KW-0699">rRNA-binding</keyword>